<feature type="chain" id="PRO_0000232027" description="Phenylalanine--tRNA ligase alpha subunit">
    <location>
        <begin position="1"/>
        <end position="352"/>
    </location>
</feature>
<feature type="binding site" evidence="1">
    <location>
        <position position="258"/>
    </location>
    <ligand>
        <name>Mg(2+)</name>
        <dbReference type="ChEBI" id="CHEBI:18420"/>
        <note>shared with beta subunit</note>
    </ligand>
</feature>
<proteinExistence type="inferred from homology"/>
<keyword id="KW-0030">Aminoacyl-tRNA synthetase</keyword>
<keyword id="KW-0067">ATP-binding</keyword>
<keyword id="KW-0963">Cytoplasm</keyword>
<keyword id="KW-0436">Ligase</keyword>
<keyword id="KW-0460">Magnesium</keyword>
<keyword id="KW-0479">Metal-binding</keyword>
<keyword id="KW-0547">Nucleotide-binding</keyword>
<keyword id="KW-0648">Protein biosynthesis</keyword>
<evidence type="ECO:0000255" key="1">
    <source>
        <dbReference type="HAMAP-Rule" id="MF_00281"/>
    </source>
</evidence>
<reference key="1">
    <citation type="journal article" date="2007" name="PLoS ONE">
        <title>Molecular correlates of host specialization in Staphylococcus aureus.</title>
        <authorList>
            <person name="Herron-Olson L."/>
            <person name="Fitzgerald J.R."/>
            <person name="Musser J.M."/>
            <person name="Kapur V."/>
        </authorList>
    </citation>
    <scope>NUCLEOTIDE SEQUENCE [LARGE SCALE GENOMIC DNA]</scope>
    <source>
        <strain>bovine RF122 / ET3-1</strain>
    </source>
</reference>
<accession>Q2YX87</accession>
<organism>
    <name type="scientific">Staphylococcus aureus (strain bovine RF122 / ET3-1)</name>
    <dbReference type="NCBI Taxonomy" id="273036"/>
    <lineage>
        <taxon>Bacteria</taxon>
        <taxon>Bacillati</taxon>
        <taxon>Bacillota</taxon>
        <taxon>Bacilli</taxon>
        <taxon>Bacillales</taxon>
        <taxon>Staphylococcaceae</taxon>
        <taxon>Staphylococcus</taxon>
    </lineage>
</organism>
<protein>
    <recommendedName>
        <fullName evidence="1">Phenylalanine--tRNA ligase alpha subunit</fullName>
        <ecNumber evidence="1">6.1.1.20</ecNumber>
    </recommendedName>
    <alternativeName>
        <fullName evidence="1">Phenylalanyl-tRNA synthetase alpha subunit</fullName>
        <shortName evidence="1">PheRS</shortName>
    </alternativeName>
</protein>
<sequence>MSEQQTMSELKQQALVDINEANDERALQEVKVKYLGKKGSVSGLMKLMKDLPNEEKPAFGQKVNELRQTIQNELDERQQMLVKEKLNKQLAEETVDVSLPGRHIEIGSKHPLTRTIEEIEDLFLGLGYEIVNGYEVEQDHYNFEMLNLPKSHPARDMQDSFYITDEILLRTHTSPVQARTMESRHGQGPVKIICPGKVYRRDSDDATHSHQFTQIEGLVVDKNVKMSDLKGTLELLAKKLFGADREIRLRPSYFPFTEPSVEVDVSCFKCKGKGCNVCKHTGWIEILGAGMVHPNVLEMAGFDSSEYSGFAFGMGPDRIAMLKYGIEDIRHFYTNDVRFLDQFKAVEDRGDM</sequence>
<name>SYFA_STAAB</name>
<dbReference type="EC" id="6.1.1.20" evidence="1"/>
<dbReference type="EMBL" id="AJ938182">
    <property type="protein sequence ID" value="CAI80690.1"/>
    <property type="molecule type" value="Genomic_DNA"/>
</dbReference>
<dbReference type="RefSeq" id="WP_000003570.1">
    <property type="nucleotide sequence ID" value="NC_007622.1"/>
</dbReference>
<dbReference type="SMR" id="Q2YX87"/>
<dbReference type="KEGG" id="sab:SAB1002"/>
<dbReference type="HOGENOM" id="CLU_025086_0_1_9"/>
<dbReference type="GO" id="GO:0005737">
    <property type="term" value="C:cytoplasm"/>
    <property type="evidence" value="ECO:0007669"/>
    <property type="project" value="UniProtKB-SubCell"/>
</dbReference>
<dbReference type="GO" id="GO:0005524">
    <property type="term" value="F:ATP binding"/>
    <property type="evidence" value="ECO:0007669"/>
    <property type="project" value="UniProtKB-UniRule"/>
</dbReference>
<dbReference type="GO" id="GO:0140096">
    <property type="term" value="F:catalytic activity, acting on a protein"/>
    <property type="evidence" value="ECO:0007669"/>
    <property type="project" value="UniProtKB-ARBA"/>
</dbReference>
<dbReference type="GO" id="GO:0000287">
    <property type="term" value="F:magnesium ion binding"/>
    <property type="evidence" value="ECO:0007669"/>
    <property type="project" value="UniProtKB-UniRule"/>
</dbReference>
<dbReference type="GO" id="GO:0004826">
    <property type="term" value="F:phenylalanine-tRNA ligase activity"/>
    <property type="evidence" value="ECO:0007669"/>
    <property type="project" value="UniProtKB-UniRule"/>
</dbReference>
<dbReference type="GO" id="GO:0016740">
    <property type="term" value="F:transferase activity"/>
    <property type="evidence" value="ECO:0007669"/>
    <property type="project" value="UniProtKB-ARBA"/>
</dbReference>
<dbReference type="GO" id="GO:0000049">
    <property type="term" value="F:tRNA binding"/>
    <property type="evidence" value="ECO:0007669"/>
    <property type="project" value="InterPro"/>
</dbReference>
<dbReference type="GO" id="GO:0006432">
    <property type="term" value="P:phenylalanyl-tRNA aminoacylation"/>
    <property type="evidence" value="ECO:0007669"/>
    <property type="project" value="UniProtKB-UniRule"/>
</dbReference>
<dbReference type="CDD" id="cd00496">
    <property type="entry name" value="PheRS_alpha_core"/>
    <property type="match status" value="1"/>
</dbReference>
<dbReference type="FunFam" id="3.30.930.10:FF:000003">
    <property type="entry name" value="Phenylalanine--tRNA ligase alpha subunit"/>
    <property type="match status" value="1"/>
</dbReference>
<dbReference type="Gene3D" id="3.30.930.10">
    <property type="entry name" value="Bira Bifunctional Protein, Domain 2"/>
    <property type="match status" value="1"/>
</dbReference>
<dbReference type="HAMAP" id="MF_00281">
    <property type="entry name" value="Phe_tRNA_synth_alpha1"/>
    <property type="match status" value="1"/>
</dbReference>
<dbReference type="InterPro" id="IPR006195">
    <property type="entry name" value="aa-tRNA-synth_II"/>
</dbReference>
<dbReference type="InterPro" id="IPR045864">
    <property type="entry name" value="aa-tRNA-synth_II/BPL/LPL"/>
</dbReference>
<dbReference type="InterPro" id="IPR004529">
    <property type="entry name" value="Phe-tRNA-synth_IIc_asu"/>
</dbReference>
<dbReference type="InterPro" id="IPR004188">
    <property type="entry name" value="Phe-tRNA_ligase_II_N"/>
</dbReference>
<dbReference type="InterPro" id="IPR022911">
    <property type="entry name" value="Phe_tRNA_ligase_alpha1_bac"/>
</dbReference>
<dbReference type="InterPro" id="IPR002319">
    <property type="entry name" value="Phenylalanyl-tRNA_Synthase"/>
</dbReference>
<dbReference type="InterPro" id="IPR010978">
    <property type="entry name" value="tRNA-bd_arm"/>
</dbReference>
<dbReference type="NCBIfam" id="TIGR00468">
    <property type="entry name" value="pheS"/>
    <property type="match status" value="1"/>
</dbReference>
<dbReference type="PANTHER" id="PTHR11538:SF41">
    <property type="entry name" value="PHENYLALANINE--TRNA LIGASE, MITOCHONDRIAL"/>
    <property type="match status" value="1"/>
</dbReference>
<dbReference type="PANTHER" id="PTHR11538">
    <property type="entry name" value="PHENYLALANYL-TRNA SYNTHETASE"/>
    <property type="match status" value="1"/>
</dbReference>
<dbReference type="Pfam" id="PF02912">
    <property type="entry name" value="Phe_tRNA-synt_N"/>
    <property type="match status" value="1"/>
</dbReference>
<dbReference type="Pfam" id="PF01409">
    <property type="entry name" value="tRNA-synt_2d"/>
    <property type="match status" value="1"/>
</dbReference>
<dbReference type="SUPFAM" id="SSF55681">
    <property type="entry name" value="Class II aaRS and biotin synthetases"/>
    <property type="match status" value="1"/>
</dbReference>
<dbReference type="SUPFAM" id="SSF46589">
    <property type="entry name" value="tRNA-binding arm"/>
    <property type="match status" value="1"/>
</dbReference>
<dbReference type="PROSITE" id="PS50862">
    <property type="entry name" value="AA_TRNA_LIGASE_II"/>
    <property type="match status" value="1"/>
</dbReference>
<gene>
    <name evidence="1" type="primary">pheS</name>
    <name type="ordered locus">SAB1002</name>
</gene>
<comment type="catalytic activity">
    <reaction evidence="1">
        <text>tRNA(Phe) + L-phenylalanine + ATP = L-phenylalanyl-tRNA(Phe) + AMP + diphosphate + H(+)</text>
        <dbReference type="Rhea" id="RHEA:19413"/>
        <dbReference type="Rhea" id="RHEA-COMP:9668"/>
        <dbReference type="Rhea" id="RHEA-COMP:9699"/>
        <dbReference type="ChEBI" id="CHEBI:15378"/>
        <dbReference type="ChEBI" id="CHEBI:30616"/>
        <dbReference type="ChEBI" id="CHEBI:33019"/>
        <dbReference type="ChEBI" id="CHEBI:58095"/>
        <dbReference type="ChEBI" id="CHEBI:78442"/>
        <dbReference type="ChEBI" id="CHEBI:78531"/>
        <dbReference type="ChEBI" id="CHEBI:456215"/>
        <dbReference type="EC" id="6.1.1.20"/>
    </reaction>
</comment>
<comment type="cofactor">
    <cofactor evidence="1">
        <name>Mg(2+)</name>
        <dbReference type="ChEBI" id="CHEBI:18420"/>
    </cofactor>
    <text evidence="1">Binds 2 magnesium ions per tetramer.</text>
</comment>
<comment type="subunit">
    <text evidence="1">Tetramer of two alpha and two beta subunits.</text>
</comment>
<comment type="subcellular location">
    <subcellularLocation>
        <location evidence="1">Cytoplasm</location>
    </subcellularLocation>
</comment>
<comment type="similarity">
    <text evidence="1">Belongs to the class-II aminoacyl-tRNA synthetase family. Phe-tRNA synthetase alpha subunit type 1 subfamily.</text>
</comment>